<dbReference type="EC" id="3.6.1.9" evidence="1"/>
<dbReference type="EMBL" id="CP000607">
    <property type="protein sequence ID" value="ABP36792.1"/>
    <property type="molecule type" value="Genomic_DNA"/>
</dbReference>
<dbReference type="SMR" id="A4SE83"/>
<dbReference type="STRING" id="290318.Cvib_0777"/>
<dbReference type="KEGG" id="pvi:Cvib_0777"/>
<dbReference type="eggNOG" id="COG0424">
    <property type="taxonomic scope" value="Bacteria"/>
</dbReference>
<dbReference type="HOGENOM" id="CLU_040416_2_1_10"/>
<dbReference type="OrthoDB" id="9807767at2"/>
<dbReference type="GO" id="GO:0005737">
    <property type="term" value="C:cytoplasm"/>
    <property type="evidence" value="ECO:0007669"/>
    <property type="project" value="UniProtKB-SubCell"/>
</dbReference>
<dbReference type="GO" id="GO:0036218">
    <property type="term" value="F:dTTP diphosphatase activity"/>
    <property type="evidence" value="ECO:0007669"/>
    <property type="project" value="RHEA"/>
</dbReference>
<dbReference type="GO" id="GO:0036221">
    <property type="term" value="F:UTP diphosphatase activity"/>
    <property type="evidence" value="ECO:0007669"/>
    <property type="project" value="RHEA"/>
</dbReference>
<dbReference type="GO" id="GO:0009117">
    <property type="term" value="P:nucleotide metabolic process"/>
    <property type="evidence" value="ECO:0007669"/>
    <property type="project" value="UniProtKB-KW"/>
</dbReference>
<dbReference type="CDD" id="cd00555">
    <property type="entry name" value="Maf"/>
    <property type="match status" value="1"/>
</dbReference>
<dbReference type="Gene3D" id="3.90.950.10">
    <property type="match status" value="1"/>
</dbReference>
<dbReference type="HAMAP" id="MF_00528">
    <property type="entry name" value="Maf"/>
    <property type="match status" value="1"/>
</dbReference>
<dbReference type="InterPro" id="IPR029001">
    <property type="entry name" value="ITPase-like_fam"/>
</dbReference>
<dbReference type="InterPro" id="IPR003697">
    <property type="entry name" value="Maf-like"/>
</dbReference>
<dbReference type="NCBIfam" id="TIGR00172">
    <property type="entry name" value="maf"/>
    <property type="match status" value="1"/>
</dbReference>
<dbReference type="PANTHER" id="PTHR43213">
    <property type="entry name" value="BIFUNCTIONAL DTTP/UTP PYROPHOSPHATASE/METHYLTRANSFERASE PROTEIN-RELATED"/>
    <property type="match status" value="1"/>
</dbReference>
<dbReference type="PANTHER" id="PTHR43213:SF5">
    <property type="entry name" value="BIFUNCTIONAL DTTP_UTP PYROPHOSPHATASE_METHYLTRANSFERASE PROTEIN-RELATED"/>
    <property type="match status" value="1"/>
</dbReference>
<dbReference type="Pfam" id="PF02545">
    <property type="entry name" value="Maf"/>
    <property type="match status" value="1"/>
</dbReference>
<dbReference type="PIRSF" id="PIRSF006305">
    <property type="entry name" value="Maf"/>
    <property type="match status" value="1"/>
</dbReference>
<dbReference type="SUPFAM" id="SSF52972">
    <property type="entry name" value="ITPase-like"/>
    <property type="match status" value="1"/>
</dbReference>
<comment type="function">
    <text evidence="1">Nucleoside triphosphate pyrophosphatase that hydrolyzes dTTP and UTP. May have a dual role in cell division arrest and in preventing the incorporation of modified nucleotides into cellular nucleic acids.</text>
</comment>
<comment type="catalytic activity">
    <reaction evidence="1">
        <text>dTTP + H2O = dTMP + diphosphate + H(+)</text>
        <dbReference type="Rhea" id="RHEA:28534"/>
        <dbReference type="ChEBI" id="CHEBI:15377"/>
        <dbReference type="ChEBI" id="CHEBI:15378"/>
        <dbReference type="ChEBI" id="CHEBI:33019"/>
        <dbReference type="ChEBI" id="CHEBI:37568"/>
        <dbReference type="ChEBI" id="CHEBI:63528"/>
        <dbReference type="EC" id="3.6.1.9"/>
    </reaction>
</comment>
<comment type="catalytic activity">
    <reaction evidence="1">
        <text>UTP + H2O = UMP + diphosphate + H(+)</text>
        <dbReference type="Rhea" id="RHEA:29395"/>
        <dbReference type="ChEBI" id="CHEBI:15377"/>
        <dbReference type="ChEBI" id="CHEBI:15378"/>
        <dbReference type="ChEBI" id="CHEBI:33019"/>
        <dbReference type="ChEBI" id="CHEBI:46398"/>
        <dbReference type="ChEBI" id="CHEBI:57865"/>
        <dbReference type="EC" id="3.6.1.9"/>
    </reaction>
</comment>
<comment type="cofactor">
    <cofactor evidence="1">
        <name>a divalent metal cation</name>
        <dbReference type="ChEBI" id="CHEBI:60240"/>
    </cofactor>
</comment>
<comment type="subcellular location">
    <subcellularLocation>
        <location evidence="1">Cytoplasm</location>
    </subcellularLocation>
</comment>
<comment type="similarity">
    <text evidence="1">Belongs to the Maf family. YhdE subfamily.</text>
</comment>
<accession>A4SE83</accession>
<name>NTPPA_CHLPM</name>
<feature type="chain" id="PRO_1000081719" description="dTTP/UTP pyrophosphatase">
    <location>
        <begin position="1"/>
        <end position="193"/>
    </location>
</feature>
<feature type="active site" description="Proton acceptor" evidence="1">
    <location>
        <position position="75"/>
    </location>
</feature>
<feature type="site" description="Important for substrate specificity" evidence="1">
    <location>
        <position position="14"/>
    </location>
</feature>
<feature type="site" description="Important for substrate specificity" evidence="1">
    <location>
        <position position="76"/>
    </location>
</feature>
<feature type="site" description="Important for substrate specificity" evidence="1">
    <location>
        <position position="158"/>
    </location>
</feature>
<gene>
    <name type="ordered locus">Cvib_0777</name>
</gene>
<proteinExistence type="inferred from homology"/>
<sequence length="193" mass="21147">MAFPPIILASQSPRRKEILQLSGLSFSTVSIETPEHLDPAESIESNVRRIAEEKAKAAIQSFQNDTRDPVLLGADTVVAIDGRILGKPANAAEALEMLLQLQGRTHEVHTGFALLQSAHLYSECATTEVTLNKMTEEEILHYINTAAPFDKAGSYGIQDPVMACFVSSITGCYYNVMGLPLSRVWMALQKLRS</sequence>
<organism>
    <name type="scientific">Chlorobium phaeovibrioides (strain DSM 265 / 1930)</name>
    <name type="common">Prosthecochloris vibrioformis (strain DSM 265)</name>
    <dbReference type="NCBI Taxonomy" id="290318"/>
    <lineage>
        <taxon>Bacteria</taxon>
        <taxon>Pseudomonadati</taxon>
        <taxon>Chlorobiota</taxon>
        <taxon>Chlorobiia</taxon>
        <taxon>Chlorobiales</taxon>
        <taxon>Chlorobiaceae</taxon>
        <taxon>Chlorobium/Pelodictyon group</taxon>
        <taxon>Chlorobium</taxon>
    </lineage>
</organism>
<reference key="1">
    <citation type="submission" date="2007-03" db="EMBL/GenBank/DDBJ databases">
        <title>Complete sequence of Prosthecochloris vibrioformis DSM 265.</title>
        <authorList>
            <consortium name="US DOE Joint Genome Institute"/>
            <person name="Copeland A."/>
            <person name="Lucas S."/>
            <person name="Lapidus A."/>
            <person name="Barry K."/>
            <person name="Detter J.C."/>
            <person name="Glavina del Rio T."/>
            <person name="Hammon N."/>
            <person name="Israni S."/>
            <person name="Pitluck S."/>
            <person name="Schmutz J."/>
            <person name="Larimer F."/>
            <person name="Land M."/>
            <person name="Hauser L."/>
            <person name="Mikhailova N."/>
            <person name="Li T."/>
            <person name="Overmann J."/>
            <person name="Schuster S.C."/>
            <person name="Bryant D.A."/>
            <person name="Richardson P."/>
        </authorList>
    </citation>
    <scope>NUCLEOTIDE SEQUENCE [LARGE SCALE GENOMIC DNA]</scope>
    <source>
        <strain>DSM 265 / 1930</strain>
    </source>
</reference>
<protein>
    <recommendedName>
        <fullName evidence="1">dTTP/UTP pyrophosphatase</fullName>
        <shortName evidence="1">dTTPase/UTPase</shortName>
        <ecNumber evidence="1">3.6.1.9</ecNumber>
    </recommendedName>
    <alternativeName>
        <fullName evidence="1">Nucleoside triphosphate pyrophosphatase</fullName>
    </alternativeName>
    <alternativeName>
        <fullName evidence="1">Nucleotide pyrophosphatase</fullName>
        <shortName evidence="1">Nucleotide PPase</shortName>
    </alternativeName>
</protein>
<evidence type="ECO:0000255" key="1">
    <source>
        <dbReference type="HAMAP-Rule" id="MF_00528"/>
    </source>
</evidence>
<keyword id="KW-0963">Cytoplasm</keyword>
<keyword id="KW-0378">Hydrolase</keyword>
<keyword id="KW-0546">Nucleotide metabolism</keyword>